<dbReference type="EC" id="6.1.1.20" evidence="1"/>
<dbReference type="EMBL" id="CP000939">
    <property type="protein sequence ID" value="ACA44286.1"/>
    <property type="molecule type" value="Genomic_DNA"/>
</dbReference>
<dbReference type="RefSeq" id="WP_003403382.1">
    <property type="nucleotide sequence ID" value="NC_010516.1"/>
</dbReference>
<dbReference type="SMR" id="B1IML3"/>
<dbReference type="GeneID" id="5185223"/>
<dbReference type="KEGG" id="cbb:CLD_1410"/>
<dbReference type="HOGENOM" id="CLU_025086_0_1_9"/>
<dbReference type="Proteomes" id="UP000008541">
    <property type="component" value="Chromosome"/>
</dbReference>
<dbReference type="GO" id="GO:0005737">
    <property type="term" value="C:cytoplasm"/>
    <property type="evidence" value="ECO:0007669"/>
    <property type="project" value="UniProtKB-SubCell"/>
</dbReference>
<dbReference type="GO" id="GO:0005524">
    <property type="term" value="F:ATP binding"/>
    <property type="evidence" value="ECO:0007669"/>
    <property type="project" value="UniProtKB-UniRule"/>
</dbReference>
<dbReference type="GO" id="GO:0140096">
    <property type="term" value="F:catalytic activity, acting on a protein"/>
    <property type="evidence" value="ECO:0007669"/>
    <property type="project" value="UniProtKB-ARBA"/>
</dbReference>
<dbReference type="GO" id="GO:0000287">
    <property type="term" value="F:magnesium ion binding"/>
    <property type="evidence" value="ECO:0007669"/>
    <property type="project" value="UniProtKB-UniRule"/>
</dbReference>
<dbReference type="GO" id="GO:0004826">
    <property type="term" value="F:phenylalanine-tRNA ligase activity"/>
    <property type="evidence" value="ECO:0007669"/>
    <property type="project" value="UniProtKB-UniRule"/>
</dbReference>
<dbReference type="GO" id="GO:0016740">
    <property type="term" value="F:transferase activity"/>
    <property type="evidence" value="ECO:0007669"/>
    <property type="project" value="UniProtKB-ARBA"/>
</dbReference>
<dbReference type="GO" id="GO:0000049">
    <property type="term" value="F:tRNA binding"/>
    <property type="evidence" value="ECO:0007669"/>
    <property type="project" value="InterPro"/>
</dbReference>
<dbReference type="GO" id="GO:0006432">
    <property type="term" value="P:phenylalanyl-tRNA aminoacylation"/>
    <property type="evidence" value="ECO:0007669"/>
    <property type="project" value="UniProtKB-UniRule"/>
</dbReference>
<dbReference type="CDD" id="cd00496">
    <property type="entry name" value="PheRS_alpha_core"/>
    <property type="match status" value="1"/>
</dbReference>
<dbReference type="FunFam" id="3.30.930.10:FF:000003">
    <property type="entry name" value="Phenylalanine--tRNA ligase alpha subunit"/>
    <property type="match status" value="1"/>
</dbReference>
<dbReference type="Gene3D" id="3.30.930.10">
    <property type="entry name" value="Bira Bifunctional Protein, Domain 2"/>
    <property type="match status" value="1"/>
</dbReference>
<dbReference type="HAMAP" id="MF_00281">
    <property type="entry name" value="Phe_tRNA_synth_alpha1"/>
    <property type="match status" value="1"/>
</dbReference>
<dbReference type="InterPro" id="IPR006195">
    <property type="entry name" value="aa-tRNA-synth_II"/>
</dbReference>
<dbReference type="InterPro" id="IPR045864">
    <property type="entry name" value="aa-tRNA-synth_II/BPL/LPL"/>
</dbReference>
<dbReference type="InterPro" id="IPR004529">
    <property type="entry name" value="Phe-tRNA-synth_IIc_asu"/>
</dbReference>
<dbReference type="InterPro" id="IPR004188">
    <property type="entry name" value="Phe-tRNA_ligase_II_N"/>
</dbReference>
<dbReference type="InterPro" id="IPR022911">
    <property type="entry name" value="Phe_tRNA_ligase_alpha1_bac"/>
</dbReference>
<dbReference type="InterPro" id="IPR002319">
    <property type="entry name" value="Phenylalanyl-tRNA_Synthase"/>
</dbReference>
<dbReference type="InterPro" id="IPR010978">
    <property type="entry name" value="tRNA-bd_arm"/>
</dbReference>
<dbReference type="NCBIfam" id="TIGR00468">
    <property type="entry name" value="pheS"/>
    <property type="match status" value="1"/>
</dbReference>
<dbReference type="PANTHER" id="PTHR11538:SF41">
    <property type="entry name" value="PHENYLALANINE--TRNA LIGASE, MITOCHONDRIAL"/>
    <property type="match status" value="1"/>
</dbReference>
<dbReference type="PANTHER" id="PTHR11538">
    <property type="entry name" value="PHENYLALANYL-TRNA SYNTHETASE"/>
    <property type="match status" value="1"/>
</dbReference>
<dbReference type="Pfam" id="PF02912">
    <property type="entry name" value="Phe_tRNA-synt_N"/>
    <property type="match status" value="1"/>
</dbReference>
<dbReference type="Pfam" id="PF01409">
    <property type="entry name" value="tRNA-synt_2d"/>
    <property type="match status" value="1"/>
</dbReference>
<dbReference type="SUPFAM" id="SSF55681">
    <property type="entry name" value="Class II aaRS and biotin synthetases"/>
    <property type="match status" value="1"/>
</dbReference>
<dbReference type="SUPFAM" id="SSF46589">
    <property type="entry name" value="tRNA-binding arm"/>
    <property type="match status" value="1"/>
</dbReference>
<dbReference type="PROSITE" id="PS50862">
    <property type="entry name" value="AA_TRNA_LIGASE_II"/>
    <property type="match status" value="1"/>
</dbReference>
<organism>
    <name type="scientific">Clostridium botulinum (strain Okra / Type B1)</name>
    <dbReference type="NCBI Taxonomy" id="498213"/>
    <lineage>
        <taxon>Bacteria</taxon>
        <taxon>Bacillati</taxon>
        <taxon>Bacillota</taxon>
        <taxon>Clostridia</taxon>
        <taxon>Eubacteriales</taxon>
        <taxon>Clostridiaceae</taxon>
        <taxon>Clostridium</taxon>
    </lineage>
</organism>
<name>SYFA_CLOBK</name>
<keyword id="KW-0030">Aminoacyl-tRNA synthetase</keyword>
<keyword id="KW-0067">ATP-binding</keyword>
<keyword id="KW-0963">Cytoplasm</keyword>
<keyword id="KW-0436">Ligase</keyword>
<keyword id="KW-0460">Magnesium</keyword>
<keyword id="KW-0479">Metal-binding</keyword>
<keyword id="KW-0547">Nucleotide-binding</keyword>
<keyword id="KW-0648">Protein biosynthesis</keyword>
<protein>
    <recommendedName>
        <fullName evidence="1">Phenylalanine--tRNA ligase alpha subunit</fullName>
        <ecNumber evidence="1">6.1.1.20</ecNumber>
    </recommendedName>
    <alternativeName>
        <fullName evidence="1">Phenylalanyl-tRNA synthetase alpha subunit</fullName>
        <shortName evidence="1">PheRS</shortName>
    </alternativeName>
</protein>
<comment type="catalytic activity">
    <reaction evidence="1">
        <text>tRNA(Phe) + L-phenylalanine + ATP = L-phenylalanyl-tRNA(Phe) + AMP + diphosphate + H(+)</text>
        <dbReference type="Rhea" id="RHEA:19413"/>
        <dbReference type="Rhea" id="RHEA-COMP:9668"/>
        <dbReference type="Rhea" id="RHEA-COMP:9699"/>
        <dbReference type="ChEBI" id="CHEBI:15378"/>
        <dbReference type="ChEBI" id="CHEBI:30616"/>
        <dbReference type="ChEBI" id="CHEBI:33019"/>
        <dbReference type="ChEBI" id="CHEBI:58095"/>
        <dbReference type="ChEBI" id="CHEBI:78442"/>
        <dbReference type="ChEBI" id="CHEBI:78531"/>
        <dbReference type="ChEBI" id="CHEBI:456215"/>
        <dbReference type="EC" id="6.1.1.20"/>
    </reaction>
</comment>
<comment type="cofactor">
    <cofactor evidence="1">
        <name>Mg(2+)</name>
        <dbReference type="ChEBI" id="CHEBI:18420"/>
    </cofactor>
    <text evidence="1">Binds 2 magnesium ions per tetramer.</text>
</comment>
<comment type="subunit">
    <text evidence="1">Tetramer of two alpha and two beta subunits.</text>
</comment>
<comment type="subcellular location">
    <subcellularLocation>
        <location evidence="1">Cytoplasm</location>
    </subcellularLocation>
</comment>
<comment type="similarity">
    <text evidence="1">Belongs to the class-II aminoacyl-tRNA synthetase family. Phe-tRNA synthetase alpha subunit type 1 subfamily.</text>
</comment>
<reference key="1">
    <citation type="journal article" date="2007" name="PLoS ONE">
        <title>Analysis of the neurotoxin complex genes in Clostridium botulinum A1-A4 and B1 strains: BoNT/A3, /Ba4 and /B1 clusters are located within plasmids.</title>
        <authorList>
            <person name="Smith T.J."/>
            <person name="Hill K.K."/>
            <person name="Foley B.T."/>
            <person name="Detter J.C."/>
            <person name="Munk A.C."/>
            <person name="Bruce D.C."/>
            <person name="Doggett N.A."/>
            <person name="Smith L.A."/>
            <person name="Marks J.D."/>
            <person name="Xie G."/>
            <person name="Brettin T.S."/>
        </authorList>
    </citation>
    <scope>NUCLEOTIDE SEQUENCE [LARGE SCALE GENOMIC DNA]</scope>
    <source>
        <strain>Okra / Type B1</strain>
    </source>
</reference>
<accession>B1IML3</accession>
<feature type="chain" id="PRO_1000114860" description="Phenylalanine--tRNA ligase alpha subunit">
    <location>
        <begin position="1"/>
        <end position="339"/>
    </location>
</feature>
<feature type="binding site" evidence="1">
    <location>
        <position position="254"/>
    </location>
    <ligand>
        <name>Mg(2+)</name>
        <dbReference type="ChEBI" id="CHEBI:18420"/>
        <note>shared with beta subunit</note>
    </ligand>
</feature>
<evidence type="ECO:0000255" key="1">
    <source>
        <dbReference type="HAMAP-Rule" id="MF_00281"/>
    </source>
</evidence>
<proteinExistence type="inferred from homology"/>
<sequence>MRQKLEEIKNSAINELKTTLSKDQLEAIRVKYLGKKGELTQILRGMGALSQEERPIVGKVANEVRSYIEETIKEAFSDIKNKEKSIRLENETIDITMPGKKQAVGKRHPLDLTLESMKDIFISMGFTIEEGPEVELDKYNFEALNIPKNHPARGEQDTFYINDNLVLRTQTSPIQIRTMENQKPPIKMIAPGKVYRSDSVDATHSPIFYQMEGLVVDKGITFSDLKGTLELFAKRMFGDKVKTKFRPHHFPFTEPSAEMDATCFVCNGEGCKVCKGSGWIELLGCGMVHPQVLRNCNIDPEVYSGFAFGFGVDRMVMMKYGIDDIRLLYESDMRFLNQF</sequence>
<gene>
    <name evidence="1" type="primary">pheS</name>
    <name type="ordered locus">CLD_1410</name>
</gene>